<reference key="1">
    <citation type="journal article" date="1996" name="Cytogenet. Cell Genet.">
        <title>A novel Kruppel-associated box containing the SSX gene (SSX3) on the human X chromosome is not implicated in t(X;18)-positive synovial sarcomas.</title>
        <authorList>
            <person name="de Leeuw B."/>
            <person name="Balemans M."/>
            <person name="Geurts van Kessel A."/>
        </authorList>
    </citation>
    <scope>NUCLEOTIDE SEQUENCE [MRNA] (ISOFORM 1)</scope>
    <source>
        <tissue>Fibrosarcoma</tissue>
        <tissue>Testis</tissue>
    </source>
</reference>
<reference key="2">
    <citation type="journal article" date="1997" name="Int. J. Cancer">
        <title>SSX: a multigene family with several members transcribed in normal testis and human cancer.</title>
        <authorList>
            <person name="Gure A.O."/>
            <person name="Tuereci O."/>
            <person name="Sahin U."/>
            <person name="Tsang S."/>
            <person name="Scanlan M.J."/>
            <person name="Jager E."/>
            <person name="Knuth A."/>
            <person name="Pfreundschuh M."/>
            <person name="Old L.J."/>
            <person name="Chen Y.-T."/>
        </authorList>
    </citation>
    <scope>NUCLEOTIDE SEQUENCE [MRNA] (ISOFORM 1)</scope>
</reference>
<reference key="3">
    <citation type="journal article" date="2005" name="Nature">
        <title>The DNA sequence of the human X chromosome.</title>
        <authorList>
            <person name="Ross M.T."/>
            <person name="Grafham D.V."/>
            <person name="Coffey A.J."/>
            <person name="Scherer S."/>
            <person name="McLay K."/>
            <person name="Muzny D."/>
            <person name="Platzer M."/>
            <person name="Howell G.R."/>
            <person name="Burrows C."/>
            <person name="Bird C.P."/>
            <person name="Frankish A."/>
            <person name="Lovell F.L."/>
            <person name="Howe K.L."/>
            <person name="Ashurst J.L."/>
            <person name="Fulton R.S."/>
            <person name="Sudbrak R."/>
            <person name="Wen G."/>
            <person name="Jones M.C."/>
            <person name="Hurles M.E."/>
            <person name="Andrews T.D."/>
            <person name="Scott C.E."/>
            <person name="Searle S."/>
            <person name="Ramser J."/>
            <person name="Whittaker A."/>
            <person name="Deadman R."/>
            <person name="Carter N.P."/>
            <person name="Hunt S.E."/>
            <person name="Chen R."/>
            <person name="Cree A."/>
            <person name="Gunaratne P."/>
            <person name="Havlak P."/>
            <person name="Hodgson A."/>
            <person name="Metzker M.L."/>
            <person name="Richards S."/>
            <person name="Scott G."/>
            <person name="Steffen D."/>
            <person name="Sodergren E."/>
            <person name="Wheeler D.A."/>
            <person name="Worley K.C."/>
            <person name="Ainscough R."/>
            <person name="Ambrose K.D."/>
            <person name="Ansari-Lari M.A."/>
            <person name="Aradhya S."/>
            <person name="Ashwell R.I."/>
            <person name="Babbage A.K."/>
            <person name="Bagguley C.L."/>
            <person name="Ballabio A."/>
            <person name="Banerjee R."/>
            <person name="Barker G.E."/>
            <person name="Barlow K.F."/>
            <person name="Barrett I.P."/>
            <person name="Bates K.N."/>
            <person name="Beare D.M."/>
            <person name="Beasley H."/>
            <person name="Beasley O."/>
            <person name="Beck A."/>
            <person name="Bethel G."/>
            <person name="Blechschmidt K."/>
            <person name="Brady N."/>
            <person name="Bray-Allen S."/>
            <person name="Bridgeman A.M."/>
            <person name="Brown A.J."/>
            <person name="Brown M.J."/>
            <person name="Bonnin D."/>
            <person name="Bruford E.A."/>
            <person name="Buhay C."/>
            <person name="Burch P."/>
            <person name="Burford D."/>
            <person name="Burgess J."/>
            <person name="Burrill W."/>
            <person name="Burton J."/>
            <person name="Bye J.M."/>
            <person name="Carder C."/>
            <person name="Carrel L."/>
            <person name="Chako J."/>
            <person name="Chapman J.C."/>
            <person name="Chavez D."/>
            <person name="Chen E."/>
            <person name="Chen G."/>
            <person name="Chen Y."/>
            <person name="Chen Z."/>
            <person name="Chinault C."/>
            <person name="Ciccodicola A."/>
            <person name="Clark S.Y."/>
            <person name="Clarke G."/>
            <person name="Clee C.M."/>
            <person name="Clegg S."/>
            <person name="Clerc-Blankenburg K."/>
            <person name="Clifford K."/>
            <person name="Cobley V."/>
            <person name="Cole C.G."/>
            <person name="Conquer J.S."/>
            <person name="Corby N."/>
            <person name="Connor R.E."/>
            <person name="David R."/>
            <person name="Davies J."/>
            <person name="Davis C."/>
            <person name="Davis J."/>
            <person name="Delgado O."/>
            <person name="Deshazo D."/>
            <person name="Dhami P."/>
            <person name="Ding Y."/>
            <person name="Dinh H."/>
            <person name="Dodsworth S."/>
            <person name="Draper H."/>
            <person name="Dugan-Rocha S."/>
            <person name="Dunham A."/>
            <person name="Dunn M."/>
            <person name="Durbin K.J."/>
            <person name="Dutta I."/>
            <person name="Eades T."/>
            <person name="Ellwood M."/>
            <person name="Emery-Cohen A."/>
            <person name="Errington H."/>
            <person name="Evans K.L."/>
            <person name="Faulkner L."/>
            <person name="Francis F."/>
            <person name="Frankland J."/>
            <person name="Fraser A.E."/>
            <person name="Galgoczy P."/>
            <person name="Gilbert J."/>
            <person name="Gill R."/>
            <person name="Gloeckner G."/>
            <person name="Gregory S.G."/>
            <person name="Gribble S."/>
            <person name="Griffiths C."/>
            <person name="Grocock R."/>
            <person name="Gu Y."/>
            <person name="Gwilliam R."/>
            <person name="Hamilton C."/>
            <person name="Hart E.A."/>
            <person name="Hawes A."/>
            <person name="Heath P.D."/>
            <person name="Heitmann K."/>
            <person name="Hennig S."/>
            <person name="Hernandez J."/>
            <person name="Hinzmann B."/>
            <person name="Ho S."/>
            <person name="Hoffs M."/>
            <person name="Howden P.J."/>
            <person name="Huckle E.J."/>
            <person name="Hume J."/>
            <person name="Hunt P.J."/>
            <person name="Hunt A.R."/>
            <person name="Isherwood J."/>
            <person name="Jacob L."/>
            <person name="Johnson D."/>
            <person name="Jones S."/>
            <person name="de Jong P.J."/>
            <person name="Joseph S.S."/>
            <person name="Keenan S."/>
            <person name="Kelly S."/>
            <person name="Kershaw J.K."/>
            <person name="Khan Z."/>
            <person name="Kioschis P."/>
            <person name="Klages S."/>
            <person name="Knights A.J."/>
            <person name="Kosiura A."/>
            <person name="Kovar-Smith C."/>
            <person name="Laird G.K."/>
            <person name="Langford C."/>
            <person name="Lawlor S."/>
            <person name="Leversha M."/>
            <person name="Lewis L."/>
            <person name="Liu W."/>
            <person name="Lloyd C."/>
            <person name="Lloyd D.M."/>
            <person name="Loulseged H."/>
            <person name="Loveland J.E."/>
            <person name="Lovell J.D."/>
            <person name="Lozado R."/>
            <person name="Lu J."/>
            <person name="Lyne R."/>
            <person name="Ma J."/>
            <person name="Maheshwari M."/>
            <person name="Matthews L.H."/>
            <person name="McDowall J."/>
            <person name="McLaren S."/>
            <person name="McMurray A."/>
            <person name="Meidl P."/>
            <person name="Meitinger T."/>
            <person name="Milne S."/>
            <person name="Miner G."/>
            <person name="Mistry S.L."/>
            <person name="Morgan M."/>
            <person name="Morris S."/>
            <person name="Mueller I."/>
            <person name="Mullikin J.C."/>
            <person name="Nguyen N."/>
            <person name="Nordsiek G."/>
            <person name="Nyakatura G."/>
            <person name="O'dell C.N."/>
            <person name="Okwuonu G."/>
            <person name="Palmer S."/>
            <person name="Pandian R."/>
            <person name="Parker D."/>
            <person name="Parrish J."/>
            <person name="Pasternak S."/>
            <person name="Patel D."/>
            <person name="Pearce A.V."/>
            <person name="Pearson D.M."/>
            <person name="Pelan S.E."/>
            <person name="Perez L."/>
            <person name="Porter K.M."/>
            <person name="Ramsey Y."/>
            <person name="Reichwald K."/>
            <person name="Rhodes S."/>
            <person name="Ridler K.A."/>
            <person name="Schlessinger D."/>
            <person name="Schueler M.G."/>
            <person name="Sehra H.K."/>
            <person name="Shaw-Smith C."/>
            <person name="Shen H."/>
            <person name="Sheridan E.M."/>
            <person name="Shownkeen R."/>
            <person name="Skuce C.D."/>
            <person name="Smith M.L."/>
            <person name="Sotheran E.C."/>
            <person name="Steingruber H.E."/>
            <person name="Steward C.A."/>
            <person name="Storey R."/>
            <person name="Swann R.M."/>
            <person name="Swarbreck D."/>
            <person name="Tabor P.E."/>
            <person name="Taudien S."/>
            <person name="Taylor T."/>
            <person name="Teague B."/>
            <person name="Thomas K."/>
            <person name="Thorpe A."/>
            <person name="Timms K."/>
            <person name="Tracey A."/>
            <person name="Trevanion S."/>
            <person name="Tromans A.C."/>
            <person name="d'Urso M."/>
            <person name="Verduzco D."/>
            <person name="Villasana D."/>
            <person name="Waldron L."/>
            <person name="Wall M."/>
            <person name="Wang Q."/>
            <person name="Warren J."/>
            <person name="Warry G.L."/>
            <person name="Wei X."/>
            <person name="West A."/>
            <person name="Whitehead S.L."/>
            <person name="Whiteley M.N."/>
            <person name="Wilkinson J.E."/>
            <person name="Willey D.L."/>
            <person name="Williams G."/>
            <person name="Williams L."/>
            <person name="Williamson A."/>
            <person name="Williamson H."/>
            <person name="Wilming L."/>
            <person name="Woodmansey R.L."/>
            <person name="Wray P.W."/>
            <person name="Yen J."/>
            <person name="Zhang J."/>
            <person name="Zhou J."/>
            <person name="Zoghbi H."/>
            <person name="Zorilla S."/>
            <person name="Buck D."/>
            <person name="Reinhardt R."/>
            <person name="Poustka A."/>
            <person name="Rosenthal A."/>
            <person name="Lehrach H."/>
            <person name="Meindl A."/>
            <person name="Minx P.J."/>
            <person name="Hillier L.W."/>
            <person name="Willard H.F."/>
            <person name="Wilson R.K."/>
            <person name="Waterston R.H."/>
            <person name="Rice C.M."/>
            <person name="Vaudin M."/>
            <person name="Coulson A."/>
            <person name="Nelson D.L."/>
            <person name="Weinstock G."/>
            <person name="Sulston J.E."/>
            <person name="Durbin R.M."/>
            <person name="Hubbard T."/>
            <person name="Gibbs R.A."/>
            <person name="Beck S."/>
            <person name="Rogers J."/>
            <person name="Bentley D.R."/>
        </authorList>
    </citation>
    <scope>NUCLEOTIDE SEQUENCE [LARGE SCALE GENOMIC DNA]</scope>
</reference>
<reference key="4">
    <citation type="submission" date="2005-07" db="EMBL/GenBank/DDBJ databases">
        <authorList>
            <person name="Mural R.J."/>
            <person name="Istrail S."/>
            <person name="Sutton G."/>
            <person name="Florea L."/>
            <person name="Halpern A.L."/>
            <person name="Mobarry C.M."/>
            <person name="Lippert R."/>
            <person name="Walenz B."/>
            <person name="Shatkay H."/>
            <person name="Dew I."/>
            <person name="Miller J.R."/>
            <person name="Flanigan M.J."/>
            <person name="Edwards N.J."/>
            <person name="Bolanos R."/>
            <person name="Fasulo D."/>
            <person name="Halldorsson B.V."/>
            <person name="Hannenhalli S."/>
            <person name="Turner R."/>
            <person name="Yooseph S."/>
            <person name="Lu F."/>
            <person name="Nusskern D.R."/>
            <person name="Shue B.C."/>
            <person name="Zheng X.H."/>
            <person name="Zhong F."/>
            <person name="Delcher A.L."/>
            <person name="Huson D.H."/>
            <person name="Kravitz S.A."/>
            <person name="Mouchard L."/>
            <person name="Reinert K."/>
            <person name="Remington K.A."/>
            <person name="Clark A.G."/>
            <person name="Waterman M.S."/>
            <person name="Eichler E.E."/>
            <person name="Adams M.D."/>
            <person name="Hunkapiller M.W."/>
            <person name="Myers E.W."/>
            <person name="Venter J.C."/>
        </authorList>
    </citation>
    <scope>NUCLEOTIDE SEQUENCE [LARGE SCALE GENOMIC DNA]</scope>
</reference>
<reference key="5">
    <citation type="journal article" date="2004" name="Genome Res.">
        <title>The status, quality, and expansion of the NIH full-length cDNA project: the Mammalian Gene Collection (MGC).</title>
        <authorList>
            <consortium name="The MGC Project Team"/>
        </authorList>
    </citation>
    <scope>NUCLEOTIDE SEQUENCE [LARGE SCALE MRNA] (ISOFORMS 1 AND 2)</scope>
    <source>
        <tissue>Bone marrow</tissue>
    </source>
</reference>
<reference key="6">
    <citation type="journal article" date="2002" name="Genes Chromosomes Cancer">
        <title>The cancer-related protein SSX2 interacts with the human homologue of a Ras-like GTPase interactor, RAB3IP, and a novel nuclear protein, SSX2IP.</title>
        <authorList>
            <person name="de Bruijn D.R.H."/>
            <person name="dos Santos N.R."/>
            <person name="Kater-Baats E."/>
            <person name="Thijssen J."/>
            <person name="van den Berk L."/>
            <person name="Stap J."/>
            <person name="Balemans M."/>
            <person name="Schepens M."/>
            <person name="Merkx G."/>
            <person name="van Kessel A.G."/>
        </authorList>
    </citation>
    <scope>INTERACTION WITH SSX2IP</scope>
</reference>
<evidence type="ECO:0000250" key="1">
    <source>
        <dbReference type="UniProtKB" id="Q16385"/>
    </source>
</evidence>
<evidence type="ECO:0000255" key="2">
    <source>
        <dbReference type="PROSITE-ProRule" id="PRU00120"/>
    </source>
</evidence>
<evidence type="ECO:0000256" key="3">
    <source>
        <dbReference type="SAM" id="MobiDB-lite"/>
    </source>
</evidence>
<evidence type="ECO:0000269" key="4">
    <source>
    </source>
</evidence>
<evidence type="ECO:0000303" key="5">
    <source>
    </source>
</evidence>
<evidence type="ECO:0000305" key="6"/>
<gene>
    <name type="primary">SSX3</name>
</gene>
<name>SSX3_HUMAN</name>
<dbReference type="EMBL" id="S82471">
    <property type="protein sequence ID" value="AAB37436.2"/>
    <property type="molecule type" value="mRNA"/>
</dbReference>
<dbReference type="EMBL" id="U90840">
    <property type="protein sequence ID" value="AAC05819.1"/>
    <property type="molecule type" value="mRNA"/>
</dbReference>
<dbReference type="EMBL" id="AL606490">
    <property type="status" value="NOT_ANNOTATED_CDS"/>
    <property type="molecule type" value="Genomic_DNA"/>
</dbReference>
<dbReference type="EMBL" id="CH471164">
    <property type="protein sequence ID" value="EAW59347.1"/>
    <property type="molecule type" value="Genomic_DNA"/>
</dbReference>
<dbReference type="EMBL" id="BC005904">
    <property type="protein sequence ID" value="AAH05904.1"/>
    <property type="molecule type" value="mRNA"/>
</dbReference>
<dbReference type="EMBL" id="BC103862">
    <property type="protein sequence ID" value="AAI03863.1"/>
    <property type="molecule type" value="mRNA"/>
</dbReference>
<dbReference type="CCDS" id="CCDS14291.1">
    <molecule id="Q99909-1"/>
</dbReference>
<dbReference type="RefSeq" id="NP_066294.1">
    <molecule id="Q99909-1"/>
    <property type="nucleotide sequence ID" value="NM_021014.4"/>
</dbReference>
<dbReference type="RefSeq" id="XP_011542187.1">
    <molecule id="Q99909-2"/>
    <property type="nucleotide sequence ID" value="XM_011543885.3"/>
</dbReference>
<dbReference type="RefSeq" id="XP_054182334.1">
    <molecule id="Q99909-2"/>
    <property type="nucleotide sequence ID" value="XM_054326359.1"/>
</dbReference>
<dbReference type="BioGRID" id="115509">
    <property type="interactions" value="39"/>
</dbReference>
<dbReference type="FunCoup" id="Q99909">
    <property type="interactions" value="42"/>
</dbReference>
<dbReference type="IntAct" id="Q99909">
    <property type="interactions" value="34"/>
</dbReference>
<dbReference type="STRING" id="9606.ENSP00000298396"/>
<dbReference type="iPTMnet" id="Q99909"/>
<dbReference type="PhosphoSitePlus" id="Q99909"/>
<dbReference type="BioMuta" id="SSX3"/>
<dbReference type="DMDM" id="84028266"/>
<dbReference type="MassIVE" id="Q99909"/>
<dbReference type="PaxDb" id="9606-ENSP00000298396"/>
<dbReference type="PeptideAtlas" id="Q99909"/>
<dbReference type="ProteomicsDB" id="78520">
    <molecule id="Q99909-1"/>
</dbReference>
<dbReference type="ProteomicsDB" id="78521">
    <molecule id="Q99909-2"/>
</dbReference>
<dbReference type="Pumba" id="Q99909"/>
<dbReference type="Antibodypedia" id="25608">
    <property type="antibodies" value="93 antibodies from 17 providers"/>
</dbReference>
<dbReference type="DNASU" id="10214"/>
<dbReference type="Ensembl" id="ENST00000298396.7">
    <molecule id="Q99909-1"/>
    <property type="protein sequence ID" value="ENSP00000298396.2"/>
    <property type="gene ID" value="ENSG00000165584.16"/>
</dbReference>
<dbReference type="Ensembl" id="ENST00000376893.7">
    <molecule id="Q99909-2"/>
    <property type="protein sequence ID" value="ENSP00000366090.3"/>
    <property type="gene ID" value="ENSG00000165584.16"/>
</dbReference>
<dbReference type="GeneID" id="10214"/>
<dbReference type="KEGG" id="hsa:10214"/>
<dbReference type="MANE-Select" id="ENST00000298396.7">
    <property type="protein sequence ID" value="ENSP00000298396.2"/>
    <property type="RefSeq nucleotide sequence ID" value="NM_021014.4"/>
    <property type="RefSeq protein sequence ID" value="NP_066294.1"/>
</dbReference>
<dbReference type="UCSC" id="uc004djd.3">
    <molecule id="Q99909-1"/>
    <property type="organism name" value="human"/>
</dbReference>
<dbReference type="AGR" id="HGNC:11337"/>
<dbReference type="CTD" id="10214"/>
<dbReference type="DisGeNET" id="10214"/>
<dbReference type="GeneCards" id="SSX3"/>
<dbReference type="HGNC" id="HGNC:11337">
    <property type="gene designation" value="SSX3"/>
</dbReference>
<dbReference type="HPA" id="ENSG00000165584">
    <property type="expression patterns" value="Tissue enriched (testis)"/>
</dbReference>
<dbReference type="MIM" id="300325">
    <property type="type" value="gene"/>
</dbReference>
<dbReference type="neXtProt" id="NX_Q99909"/>
<dbReference type="OpenTargets" id="ENSG00000165584"/>
<dbReference type="PharmGKB" id="PA36161"/>
<dbReference type="VEuPathDB" id="HostDB:ENSG00000165584"/>
<dbReference type="eggNOG" id="ENOG502RU1A">
    <property type="taxonomic scope" value="Eukaryota"/>
</dbReference>
<dbReference type="GeneTree" id="ENSGT00390000012484"/>
<dbReference type="HOGENOM" id="CLU_097196_1_0_1"/>
<dbReference type="InParanoid" id="Q99909"/>
<dbReference type="OMA" id="LRTHHYP"/>
<dbReference type="OrthoDB" id="9587513at2759"/>
<dbReference type="PAN-GO" id="Q99909">
    <property type="GO annotations" value="1 GO annotation based on evolutionary models"/>
</dbReference>
<dbReference type="PhylomeDB" id="Q99909"/>
<dbReference type="TreeFam" id="TF338517"/>
<dbReference type="PathwayCommons" id="Q99909"/>
<dbReference type="SignaLink" id="Q99909"/>
<dbReference type="BioGRID-ORCS" id="10214">
    <property type="hits" value="51 hits in 659 CRISPR screens"/>
</dbReference>
<dbReference type="ChiTaRS" id="SSX3">
    <property type="organism name" value="human"/>
</dbReference>
<dbReference type="GenomeRNAi" id="10214"/>
<dbReference type="Pharos" id="Q99909">
    <property type="development level" value="Tdark"/>
</dbReference>
<dbReference type="PRO" id="PR:Q99909"/>
<dbReference type="Proteomes" id="UP000005640">
    <property type="component" value="Chromosome X"/>
</dbReference>
<dbReference type="RNAct" id="Q99909">
    <property type="molecule type" value="protein"/>
</dbReference>
<dbReference type="Bgee" id="ENSG00000165584">
    <property type="expression patterns" value="Expressed in buccal mucosa cell and 36 other cell types or tissues"/>
</dbReference>
<dbReference type="ExpressionAtlas" id="Q99909">
    <property type="expression patterns" value="baseline and differential"/>
</dbReference>
<dbReference type="GO" id="GO:0005634">
    <property type="term" value="C:nucleus"/>
    <property type="evidence" value="ECO:0000318"/>
    <property type="project" value="GO_Central"/>
</dbReference>
<dbReference type="GO" id="GO:0006355">
    <property type="term" value="P:regulation of DNA-templated transcription"/>
    <property type="evidence" value="ECO:0007669"/>
    <property type="project" value="InterPro"/>
</dbReference>
<dbReference type="InterPro" id="IPR003655">
    <property type="entry name" value="aKRAB"/>
</dbReference>
<dbReference type="InterPro" id="IPR001909">
    <property type="entry name" value="KRAB"/>
</dbReference>
<dbReference type="InterPro" id="IPR036051">
    <property type="entry name" value="KRAB_dom_sf"/>
</dbReference>
<dbReference type="InterPro" id="IPR019041">
    <property type="entry name" value="SSXRD_motif"/>
</dbReference>
<dbReference type="PANTHER" id="PTHR14112:SF19">
    <property type="entry name" value="PROTEIN SSX3"/>
    <property type="match status" value="1"/>
</dbReference>
<dbReference type="PANTHER" id="PTHR14112">
    <property type="entry name" value="SYNOVIAL SARCOMA, X MEMBER"/>
    <property type="match status" value="1"/>
</dbReference>
<dbReference type="Pfam" id="PF09514">
    <property type="entry name" value="SSXRD"/>
    <property type="match status" value="1"/>
</dbReference>
<dbReference type="SMART" id="SM00349">
    <property type="entry name" value="KRAB"/>
    <property type="match status" value="1"/>
</dbReference>
<dbReference type="SUPFAM" id="SSF109640">
    <property type="entry name" value="KRAB domain (Kruppel-associated box)"/>
    <property type="match status" value="1"/>
</dbReference>
<dbReference type="PROSITE" id="PS50806">
    <property type="entry name" value="KRAB_RELATED"/>
    <property type="match status" value="1"/>
</dbReference>
<accession>Q99909</accession>
<accession>O60223</accession>
<accession>Q5JQZ3</accession>
<accession>Q9BRW7</accession>
<proteinExistence type="evidence at protein level"/>
<comment type="function">
    <text>Could act as a modulator of transcription.</text>
</comment>
<comment type="subunit">
    <text evidence="4">Interacts with SSX2IP.</text>
</comment>
<comment type="interaction">
    <interactant intactId="EBI-10295431">
        <id>Q99909</id>
    </interactant>
    <interactant intactId="EBI-741181">
        <id>Q6RW13</id>
        <label>AGTRAP</label>
    </interactant>
    <organismsDiffer>false</organismsDiffer>
    <experiments>3</experiments>
</comment>
<comment type="interaction">
    <interactant intactId="EBI-10295431">
        <id>Q99909</id>
    </interactant>
    <interactant intactId="EBI-11745576">
        <id>Q6PJH3</id>
        <label>AKAP9</label>
    </interactant>
    <organismsDiffer>false</organismsDiffer>
    <experiments>5</experiments>
</comment>
<comment type="interaction">
    <interactant intactId="EBI-10295431">
        <id>Q99909</id>
    </interactant>
    <interactant intactId="EBI-11524851">
        <id>Q8NA61-2</id>
        <label>CBY2</label>
    </interactant>
    <organismsDiffer>false</organismsDiffer>
    <experiments>3</experiments>
</comment>
<comment type="interaction">
    <interactant intactId="EBI-10295431">
        <id>Q99909</id>
    </interactant>
    <interactant intactId="EBI-741977">
        <id>Q96MT8</id>
        <label>CEP63</label>
    </interactant>
    <organismsDiffer>false</organismsDiffer>
    <experiments>4</experiments>
</comment>
<comment type="interaction">
    <interactant intactId="EBI-10295431">
        <id>Q99909</id>
    </interactant>
    <interactant intactId="EBI-739624">
        <id>Q8NHQ1</id>
        <label>CEP70</label>
    </interactant>
    <organismsDiffer>false</organismsDiffer>
    <experiments>3</experiments>
</comment>
<comment type="interaction">
    <interactant intactId="EBI-10295431">
        <id>Q99909</id>
    </interactant>
    <interactant intactId="EBI-17278014">
        <id>Q8IZR5-2</id>
        <label>CMTM4</label>
    </interactant>
    <organismsDiffer>false</organismsDiffer>
    <experiments>3</experiments>
</comment>
<comment type="interaction">
    <interactant intactId="EBI-10295431">
        <id>Q99909</id>
    </interactant>
    <interactant intactId="EBI-2548702">
        <id>Q96DZ9</id>
        <label>CMTM5</label>
    </interactant>
    <organismsDiffer>false</organismsDiffer>
    <experiments>3</experiments>
</comment>
<comment type="interaction">
    <interactant intactId="EBI-10295431">
        <id>Q99909</id>
    </interactant>
    <interactant intactId="EBI-11522780">
        <id>Q96DZ9-2</id>
        <label>CMTM5</label>
    </interactant>
    <organismsDiffer>false</organismsDiffer>
    <experiments>3</experiments>
</comment>
<comment type="interaction">
    <interactant intactId="EBI-10295431">
        <id>Q99909</id>
    </interactant>
    <interactant intactId="EBI-3044087">
        <id>Q7Z3Y8</id>
        <label>KRT27</label>
    </interactant>
    <organismsDiffer>false</organismsDiffer>
    <experiments>3</experiments>
</comment>
<comment type="interaction">
    <interactant intactId="EBI-10295431">
        <id>Q99909</id>
    </interactant>
    <interactant intactId="EBI-394607">
        <id>Q9NPJ6</id>
        <label>MED4</label>
    </interactant>
    <organismsDiffer>false</organismsDiffer>
    <experiments>6</experiments>
</comment>
<comment type="interaction">
    <interactant intactId="EBI-10295431">
        <id>Q99909</id>
    </interactant>
    <interactant intactId="EBI-748397">
        <id>P50222</id>
        <label>MEOX2</label>
    </interactant>
    <organismsDiffer>false</organismsDiffer>
    <experiments>3</experiments>
</comment>
<comment type="interaction">
    <interactant intactId="EBI-10295431">
        <id>Q99909</id>
    </interactant>
    <interactant intactId="EBI-2548751">
        <id>Q8TD10</id>
        <label>MIPOL1</label>
    </interactant>
    <organismsDiffer>false</organismsDiffer>
    <experiments>7</experiments>
</comment>
<comment type="interaction">
    <interactant intactId="EBI-10295431">
        <id>Q99909</id>
    </interactant>
    <interactant intactId="EBI-10232538">
        <id>Q8WWB5</id>
        <label>PIH1D2</label>
    </interactant>
    <organismsDiffer>false</organismsDiffer>
    <experiments>3</experiments>
</comment>
<comment type="interaction">
    <interactant intactId="EBI-10295431">
        <id>Q99909</id>
    </interactant>
    <interactant intactId="EBI-14093916">
        <id>Q9UJ41-4</id>
        <label>RABGEF1</label>
    </interactant>
    <organismsDiffer>false</organismsDiffer>
    <experiments>3</experiments>
</comment>
<comment type="interaction">
    <interactant intactId="EBI-10295431">
        <id>Q99909</id>
    </interactant>
    <interactant intactId="EBI-6285694">
        <id>Q9H4E5</id>
        <label>RHOJ</label>
    </interactant>
    <organismsDiffer>false</organismsDiffer>
    <experiments>4</experiments>
</comment>
<comment type="interaction">
    <interactant intactId="EBI-10295431">
        <id>Q99909</id>
    </interactant>
    <interactant intactId="EBI-2212028">
        <id>Q9Y2D8</id>
        <label>SSX2IP</label>
    </interactant>
    <organismsDiffer>false</organismsDiffer>
    <experiments>3</experiments>
</comment>
<comment type="interaction">
    <interactant intactId="EBI-10295431">
        <id>Q99909</id>
    </interactant>
    <interactant intactId="EBI-1054417">
        <id>Q9BRT8</id>
        <label>ZNG1A</label>
    </interactant>
    <organismsDiffer>false</organismsDiffer>
    <experiments>3</experiments>
</comment>
<comment type="alternative products">
    <event type="alternative splicing"/>
    <isoform>
        <id>Q99909-1</id>
        <name>1</name>
        <sequence type="displayed"/>
    </isoform>
    <isoform>
        <id>Q99909-2</id>
        <name>2</name>
        <sequence type="described" ref="VSP_042777"/>
    </isoform>
</comment>
<comment type="similarity">
    <text evidence="6">Belongs to the SSX family.</text>
</comment>
<keyword id="KW-0025">Alternative splicing</keyword>
<keyword id="KW-0597">Phosphoprotein</keyword>
<keyword id="KW-1267">Proteomics identification</keyword>
<keyword id="KW-1185">Reference proteome</keyword>
<keyword id="KW-0804">Transcription</keyword>
<keyword id="KW-0805">Transcription regulation</keyword>
<feature type="chain" id="PRO_0000181830" description="Protein SSX3">
    <location>
        <begin position="1"/>
        <end position="188"/>
    </location>
</feature>
<feature type="domain" description="KRAB-related" evidence="2">
    <location>
        <begin position="20"/>
        <end position="83"/>
    </location>
</feature>
<feature type="region of interest" description="Disordered" evidence="3">
    <location>
        <begin position="113"/>
        <end position="162"/>
    </location>
</feature>
<feature type="compositionally biased region" description="Basic and acidic residues" evidence="3">
    <location>
        <begin position="115"/>
        <end position="127"/>
    </location>
</feature>
<feature type="modified residue" description="Phosphoserine" evidence="1">
    <location>
        <position position="123"/>
    </location>
</feature>
<feature type="splice variant" id="VSP_042777" description="In isoform 2." evidence="5">
    <original>PKRGEHAWTHRLRERKQLVIYEEISDPEEDDE</original>
    <variation>VLQRYCRFGSRPLQ</variation>
    <location>
        <begin position="157"/>
        <end position="188"/>
    </location>
</feature>
<feature type="sequence conflict" description="In Ref. 1; AAB37436." evidence="6" ref="1">
    <original>Q</original>
    <variation>L</variation>
    <location>
        <position position="95"/>
    </location>
</feature>
<protein>
    <recommendedName>
        <fullName>Protein SSX3</fullName>
    </recommendedName>
    <alternativeName>
        <fullName>Cancer/testis antigen 5.3</fullName>
        <shortName>CT5.3</shortName>
    </alternativeName>
</protein>
<organism>
    <name type="scientific">Homo sapiens</name>
    <name type="common">Human</name>
    <dbReference type="NCBI Taxonomy" id="9606"/>
    <lineage>
        <taxon>Eukaryota</taxon>
        <taxon>Metazoa</taxon>
        <taxon>Chordata</taxon>
        <taxon>Craniata</taxon>
        <taxon>Vertebrata</taxon>
        <taxon>Euteleostomi</taxon>
        <taxon>Mammalia</taxon>
        <taxon>Eutheria</taxon>
        <taxon>Euarchontoglires</taxon>
        <taxon>Primates</taxon>
        <taxon>Haplorrhini</taxon>
        <taxon>Catarrhini</taxon>
        <taxon>Hominidae</taxon>
        <taxon>Homo</taxon>
    </lineage>
</organism>
<sequence>MNGDDTFARRPTVGAQIPEKIQKAFDDIAKYFSKEEWEKMKVSEKIVYVYMKRKYEAMTKLGFKAILPSFMRNKRVTDFQGNDFDNDPNRGNQVQRPQMTFGRLQGIFPKIMPKKPAEEGNVSKEVPEASGPQNDGKQLCPPGKPTTSEKINMISGPKRGEHAWTHRLRERKQLVIYEEISDPEEDDE</sequence>